<feature type="chain" id="PRO_0000264970" description="UvrABC system protein C">
    <location>
        <begin position="1"/>
        <end position="630"/>
    </location>
</feature>
<feature type="domain" description="GIY-YIG" evidence="1">
    <location>
        <begin position="52"/>
        <end position="125"/>
    </location>
</feature>
<feature type="domain" description="UVR" evidence="1">
    <location>
        <begin position="234"/>
        <end position="269"/>
    </location>
</feature>
<feature type="region of interest" description="Disordered" evidence="2">
    <location>
        <begin position="1"/>
        <end position="96"/>
    </location>
</feature>
<feature type="compositionally biased region" description="Low complexity" evidence="2">
    <location>
        <begin position="9"/>
        <end position="28"/>
    </location>
</feature>
<feature type="compositionally biased region" description="Basic and acidic residues" evidence="2">
    <location>
        <begin position="75"/>
        <end position="91"/>
    </location>
</feature>
<keyword id="KW-0963">Cytoplasm</keyword>
<keyword id="KW-0227">DNA damage</keyword>
<keyword id="KW-0228">DNA excision</keyword>
<keyword id="KW-0234">DNA repair</keyword>
<keyword id="KW-0267">Excision nuclease</keyword>
<keyword id="KW-0742">SOS response</keyword>
<dbReference type="EMBL" id="AE017221">
    <property type="protein sequence ID" value="AAS81524.1"/>
    <property type="molecule type" value="Genomic_DNA"/>
</dbReference>
<dbReference type="SMR" id="Q72IF0"/>
<dbReference type="KEGG" id="tth:TT_C1182"/>
<dbReference type="eggNOG" id="COG0322">
    <property type="taxonomic scope" value="Bacteria"/>
</dbReference>
<dbReference type="HOGENOM" id="CLU_014841_3_2_0"/>
<dbReference type="Proteomes" id="UP000000592">
    <property type="component" value="Chromosome"/>
</dbReference>
<dbReference type="GO" id="GO:0005737">
    <property type="term" value="C:cytoplasm"/>
    <property type="evidence" value="ECO:0007669"/>
    <property type="project" value="UniProtKB-SubCell"/>
</dbReference>
<dbReference type="GO" id="GO:0009380">
    <property type="term" value="C:excinuclease repair complex"/>
    <property type="evidence" value="ECO:0007669"/>
    <property type="project" value="InterPro"/>
</dbReference>
<dbReference type="GO" id="GO:0003677">
    <property type="term" value="F:DNA binding"/>
    <property type="evidence" value="ECO:0007669"/>
    <property type="project" value="UniProtKB-UniRule"/>
</dbReference>
<dbReference type="GO" id="GO:0009381">
    <property type="term" value="F:excinuclease ABC activity"/>
    <property type="evidence" value="ECO:0007669"/>
    <property type="project" value="UniProtKB-UniRule"/>
</dbReference>
<dbReference type="GO" id="GO:0006289">
    <property type="term" value="P:nucleotide-excision repair"/>
    <property type="evidence" value="ECO:0007669"/>
    <property type="project" value="UniProtKB-UniRule"/>
</dbReference>
<dbReference type="GO" id="GO:0009432">
    <property type="term" value="P:SOS response"/>
    <property type="evidence" value="ECO:0007669"/>
    <property type="project" value="UniProtKB-UniRule"/>
</dbReference>
<dbReference type="Gene3D" id="1.10.150.20">
    <property type="entry name" value="5' to 3' exonuclease, C-terminal subdomain"/>
    <property type="match status" value="1"/>
</dbReference>
<dbReference type="Gene3D" id="3.40.1440.10">
    <property type="entry name" value="GIY-YIG endonuclease"/>
    <property type="match status" value="1"/>
</dbReference>
<dbReference type="Gene3D" id="4.10.860.10">
    <property type="entry name" value="UVR domain"/>
    <property type="match status" value="1"/>
</dbReference>
<dbReference type="Gene3D" id="3.30.420.340">
    <property type="entry name" value="UvrC, RNAse H endonuclease domain"/>
    <property type="match status" value="1"/>
</dbReference>
<dbReference type="HAMAP" id="MF_00203">
    <property type="entry name" value="UvrC"/>
    <property type="match status" value="1"/>
</dbReference>
<dbReference type="InterPro" id="IPR000305">
    <property type="entry name" value="GIY-YIG_endonuc"/>
</dbReference>
<dbReference type="InterPro" id="IPR035901">
    <property type="entry name" value="GIY-YIG_endonuc_sf"/>
</dbReference>
<dbReference type="InterPro" id="IPR003583">
    <property type="entry name" value="Hlx-hairpin-Hlx_DNA-bd_motif"/>
</dbReference>
<dbReference type="InterPro" id="IPR010994">
    <property type="entry name" value="RuvA_2-like"/>
</dbReference>
<dbReference type="InterPro" id="IPR001943">
    <property type="entry name" value="UVR_dom"/>
</dbReference>
<dbReference type="InterPro" id="IPR036876">
    <property type="entry name" value="UVR_dom_sf"/>
</dbReference>
<dbReference type="InterPro" id="IPR050066">
    <property type="entry name" value="UvrABC_protein_C"/>
</dbReference>
<dbReference type="InterPro" id="IPR004791">
    <property type="entry name" value="UvrC"/>
</dbReference>
<dbReference type="InterPro" id="IPR001162">
    <property type="entry name" value="UvrC_RNase_H_dom"/>
</dbReference>
<dbReference type="InterPro" id="IPR038476">
    <property type="entry name" value="UvrC_RNase_H_dom_sf"/>
</dbReference>
<dbReference type="NCBIfam" id="TIGR00194">
    <property type="entry name" value="uvrC"/>
    <property type="match status" value="1"/>
</dbReference>
<dbReference type="PANTHER" id="PTHR30562:SF1">
    <property type="entry name" value="UVRABC SYSTEM PROTEIN C"/>
    <property type="match status" value="1"/>
</dbReference>
<dbReference type="PANTHER" id="PTHR30562">
    <property type="entry name" value="UVRC/OXIDOREDUCTASE"/>
    <property type="match status" value="1"/>
</dbReference>
<dbReference type="Pfam" id="PF14520">
    <property type="entry name" value="HHH_5"/>
    <property type="match status" value="1"/>
</dbReference>
<dbReference type="Pfam" id="PF02151">
    <property type="entry name" value="UVR"/>
    <property type="match status" value="1"/>
</dbReference>
<dbReference type="Pfam" id="PF22920">
    <property type="entry name" value="UvrC_RNaseH"/>
    <property type="match status" value="1"/>
</dbReference>
<dbReference type="Pfam" id="PF08459">
    <property type="entry name" value="UvrC_RNaseH_dom"/>
    <property type="match status" value="1"/>
</dbReference>
<dbReference type="SMART" id="SM00278">
    <property type="entry name" value="HhH1"/>
    <property type="match status" value="2"/>
</dbReference>
<dbReference type="SUPFAM" id="SSF46600">
    <property type="entry name" value="C-terminal UvrC-binding domain of UvrB"/>
    <property type="match status" value="1"/>
</dbReference>
<dbReference type="SUPFAM" id="SSF82771">
    <property type="entry name" value="GIY-YIG endonuclease"/>
    <property type="match status" value="1"/>
</dbReference>
<dbReference type="SUPFAM" id="SSF47781">
    <property type="entry name" value="RuvA domain 2-like"/>
    <property type="match status" value="1"/>
</dbReference>
<dbReference type="PROSITE" id="PS50164">
    <property type="entry name" value="GIY_YIG"/>
    <property type="match status" value="1"/>
</dbReference>
<dbReference type="PROSITE" id="PS50151">
    <property type="entry name" value="UVR"/>
    <property type="match status" value="1"/>
</dbReference>
<dbReference type="PROSITE" id="PS50165">
    <property type="entry name" value="UVRC"/>
    <property type="match status" value="1"/>
</dbReference>
<proteinExistence type="inferred from homology"/>
<evidence type="ECO:0000255" key="1">
    <source>
        <dbReference type="HAMAP-Rule" id="MF_00203"/>
    </source>
</evidence>
<evidence type="ECO:0000256" key="2">
    <source>
        <dbReference type="SAM" id="MobiDB-lite"/>
    </source>
</evidence>
<reference key="1">
    <citation type="journal article" date="2004" name="Nat. Biotechnol.">
        <title>The genome sequence of the extreme thermophile Thermus thermophilus.</title>
        <authorList>
            <person name="Henne A."/>
            <person name="Brueggemann H."/>
            <person name="Raasch C."/>
            <person name="Wiezer A."/>
            <person name="Hartsch T."/>
            <person name="Liesegang H."/>
            <person name="Johann A."/>
            <person name="Lienard T."/>
            <person name="Gohl O."/>
            <person name="Martinez-Arias R."/>
            <person name="Jacobi C."/>
            <person name="Starkuviene V."/>
            <person name="Schlenczeck S."/>
            <person name="Dencker S."/>
            <person name="Huber R."/>
            <person name="Klenk H.-P."/>
            <person name="Kramer W."/>
            <person name="Merkl R."/>
            <person name="Gottschalk G."/>
            <person name="Fritz H.-J."/>
        </authorList>
    </citation>
    <scope>NUCLEOTIDE SEQUENCE [LARGE SCALE GENOMIC DNA]</scope>
    <source>
        <strain>ATCC BAA-163 / DSM 7039 / HB27</strain>
    </source>
</reference>
<protein>
    <recommendedName>
        <fullName evidence="1">UvrABC system protein C</fullName>
        <shortName evidence="1">Protein UvrC</shortName>
    </recommendedName>
    <alternativeName>
        <fullName evidence="1">Excinuclease ABC subunit C</fullName>
    </alternativeName>
</protein>
<organism>
    <name type="scientific">Thermus thermophilus (strain ATCC BAA-163 / DSM 7039 / HB27)</name>
    <dbReference type="NCBI Taxonomy" id="262724"/>
    <lineage>
        <taxon>Bacteria</taxon>
        <taxon>Thermotogati</taxon>
        <taxon>Deinococcota</taxon>
        <taxon>Deinococci</taxon>
        <taxon>Thermales</taxon>
        <taxon>Thermaceae</taxon>
        <taxon>Thermus</taxon>
    </lineage>
</organism>
<comment type="function">
    <text evidence="1">The UvrABC repair system catalyzes the recognition and processing of DNA lesions. UvrC both incises the 5' and 3' sides of the lesion. The N-terminal half is responsible for the 3' incision and the C-terminal half is responsible for the 5' incision.</text>
</comment>
<comment type="subunit">
    <text evidence="1">Interacts with UvrB in an incision complex.</text>
</comment>
<comment type="subcellular location">
    <subcellularLocation>
        <location evidence="1">Cytoplasm</location>
    </subcellularLocation>
</comment>
<comment type="similarity">
    <text evidence="1">Belongs to the UvrC family.</text>
</comment>
<name>UVRC_THET2</name>
<gene>
    <name evidence="1" type="primary">uvrC</name>
    <name type="ordered locus">TT_C1182</name>
</gene>
<accession>Q72IF0</accession>
<sequence>MGAEGLQGEGEVPPQGAGVPGQVQVGVHQEARHGESLQWGRAGPRPPSPSRDPRGLPVEAGGGGALRGQGQEPPRPGEKLLPRRGQGEAHRRGGTGLDFIATRDEVEALLLEANLIKAHRPLYNVLLKDDKHYPFLKLTNEPFPTLLVVRRVEEDGAKYYGPFPEAGALRRIKTLIDRLFPLRKNSGYPMKRRRYPCLNYSMGRCLAPCVGKADPEAYQEVVRQVEAVLEGRVDGLLQELEAKMREAARRLEFERAAEIRDQMEALRAFFSTDQQAFDPEMGDLDFLGMARSGALAVVQLYQVRSGRILGRISRVVEKEEATDEEILWAFLRDHYLEASPLPPLVLLPFPLEDLESLAELLKRRAGRKVELRVPKKGEKARLLELAERNARLALETELKLRERRGEHPALKALQDLLGLPARPWRLEGYDISHLQGQARVFSIAVFEGGRPKRQEYRRMRLKAGNDDYAAMEEGVFRRYTGSLKDLPLPDLLLIDGGVGQVRAAARALEKAGLRLPLVGLAKGEEVLVTPEGRELRLPLTHPALQLLIHLRDEAHQNGLRYHRKRRSEELFRVLQGIPGIGEKRRRLLLERYGGLRALKEAPLEELARLPGMSLEAARALKAALAEEEPA</sequence>